<evidence type="ECO:0000255" key="1">
    <source>
        <dbReference type="HAMAP-Rule" id="MF_00735"/>
    </source>
</evidence>
<reference key="1">
    <citation type="journal article" date="2005" name="Jpn. Agric. Res. Q.">
        <title>Genome sequence of Xanthomonas oryzae pv. oryzae suggests contribution of large numbers of effector genes and insertion sequences to its race diversity.</title>
        <authorList>
            <person name="Ochiai H."/>
            <person name="Inoue Y."/>
            <person name="Takeya M."/>
            <person name="Sasaki A."/>
            <person name="Kaku H."/>
        </authorList>
    </citation>
    <scope>NUCLEOTIDE SEQUENCE [LARGE SCALE GENOMIC DNA]</scope>
    <source>
        <strain>MAFF 311018</strain>
    </source>
</reference>
<dbReference type="EC" id="2.1.1.-" evidence="1"/>
<dbReference type="EMBL" id="AP008229">
    <property type="protein sequence ID" value="BAE67271.1"/>
    <property type="molecule type" value="Genomic_DNA"/>
</dbReference>
<dbReference type="RefSeq" id="WP_011257466.1">
    <property type="nucleotide sequence ID" value="NC_007705.1"/>
</dbReference>
<dbReference type="SMR" id="Q2P856"/>
<dbReference type="KEGG" id="xom:XOO0516"/>
<dbReference type="HOGENOM" id="CLU_049382_4_1_6"/>
<dbReference type="GO" id="GO:0005829">
    <property type="term" value="C:cytosol"/>
    <property type="evidence" value="ECO:0007669"/>
    <property type="project" value="TreeGrafter"/>
</dbReference>
<dbReference type="GO" id="GO:0016279">
    <property type="term" value="F:protein-lysine N-methyltransferase activity"/>
    <property type="evidence" value="ECO:0007669"/>
    <property type="project" value="TreeGrafter"/>
</dbReference>
<dbReference type="GO" id="GO:0032259">
    <property type="term" value="P:methylation"/>
    <property type="evidence" value="ECO:0007669"/>
    <property type="project" value="UniProtKB-KW"/>
</dbReference>
<dbReference type="CDD" id="cd02440">
    <property type="entry name" value="AdoMet_MTases"/>
    <property type="match status" value="1"/>
</dbReference>
<dbReference type="Gene3D" id="3.40.50.150">
    <property type="entry name" value="Vaccinia Virus protein VP39"/>
    <property type="match status" value="1"/>
</dbReference>
<dbReference type="HAMAP" id="MF_00735">
    <property type="entry name" value="Methyltr_PrmA"/>
    <property type="match status" value="1"/>
</dbReference>
<dbReference type="InterPro" id="IPR050078">
    <property type="entry name" value="Ribosomal_L11_MeTrfase_PrmA"/>
</dbReference>
<dbReference type="InterPro" id="IPR004498">
    <property type="entry name" value="Ribosomal_PrmA_MeTrfase"/>
</dbReference>
<dbReference type="InterPro" id="IPR029063">
    <property type="entry name" value="SAM-dependent_MTases_sf"/>
</dbReference>
<dbReference type="NCBIfam" id="TIGR00406">
    <property type="entry name" value="prmA"/>
    <property type="match status" value="1"/>
</dbReference>
<dbReference type="PANTHER" id="PTHR43648">
    <property type="entry name" value="ELECTRON TRANSFER FLAVOPROTEIN BETA SUBUNIT LYSINE METHYLTRANSFERASE"/>
    <property type="match status" value="1"/>
</dbReference>
<dbReference type="PANTHER" id="PTHR43648:SF1">
    <property type="entry name" value="ELECTRON TRANSFER FLAVOPROTEIN BETA SUBUNIT LYSINE METHYLTRANSFERASE"/>
    <property type="match status" value="1"/>
</dbReference>
<dbReference type="Pfam" id="PF06325">
    <property type="entry name" value="PrmA"/>
    <property type="match status" value="1"/>
</dbReference>
<dbReference type="PIRSF" id="PIRSF000401">
    <property type="entry name" value="RPL11_MTase"/>
    <property type="match status" value="1"/>
</dbReference>
<dbReference type="SUPFAM" id="SSF53335">
    <property type="entry name" value="S-adenosyl-L-methionine-dependent methyltransferases"/>
    <property type="match status" value="1"/>
</dbReference>
<name>PRMA_XANOM</name>
<organism>
    <name type="scientific">Xanthomonas oryzae pv. oryzae (strain MAFF 311018)</name>
    <dbReference type="NCBI Taxonomy" id="342109"/>
    <lineage>
        <taxon>Bacteria</taxon>
        <taxon>Pseudomonadati</taxon>
        <taxon>Pseudomonadota</taxon>
        <taxon>Gammaproteobacteria</taxon>
        <taxon>Lysobacterales</taxon>
        <taxon>Lysobacteraceae</taxon>
        <taxon>Xanthomonas</taxon>
    </lineage>
</organism>
<keyword id="KW-0963">Cytoplasm</keyword>
<keyword id="KW-0489">Methyltransferase</keyword>
<keyword id="KW-0949">S-adenosyl-L-methionine</keyword>
<keyword id="KW-0808">Transferase</keyword>
<feature type="chain" id="PRO_1000046124" description="Ribosomal protein L11 methyltransferase">
    <location>
        <begin position="1"/>
        <end position="313"/>
    </location>
</feature>
<feature type="binding site" evidence="1">
    <location>
        <position position="154"/>
    </location>
    <ligand>
        <name>S-adenosyl-L-methionine</name>
        <dbReference type="ChEBI" id="CHEBI:59789"/>
    </ligand>
</feature>
<feature type="binding site" evidence="1">
    <location>
        <position position="179"/>
    </location>
    <ligand>
        <name>S-adenosyl-L-methionine</name>
        <dbReference type="ChEBI" id="CHEBI:59789"/>
    </ligand>
</feature>
<feature type="binding site" evidence="1">
    <location>
        <position position="201"/>
    </location>
    <ligand>
        <name>S-adenosyl-L-methionine</name>
        <dbReference type="ChEBI" id="CHEBI:59789"/>
    </ligand>
</feature>
<feature type="binding site" evidence="1">
    <location>
        <position position="242"/>
    </location>
    <ligand>
        <name>S-adenosyl-L-methionine</name>
        <dbReference type="ChEBI" id="CHEBI:59789"/>
    </ligand>
</feature>
<sequence length="313" mass="33774">MPFLELTLSCSEVTLPRFQNALDDVGAMAVTMLDANADTSNERALLEPGVGEMPLWDRLTMTALFDGGSDALVVLAALEAFDPGLDWSQVGFRMVEDSDWIRAWIDLFKSMQFGARTFIVPWNQDVPEAANAPDAAVVRLDPGLAFGSGTHQTTALCLRWLDSLAVSGELQGRSVLDFGCGSGILAIAALKLGASHAVGVDYDPQALLATADNAHRNALEAQLAVYMPQDEPVQTYQVVVANILASALSTLADTLAARVVPGGRIALSGILHGQEDELLERYAPWFEQLRCERDDEWMRIEGVRRAASGTQNG</sequence>
<gene>
    <name evidence="1" type="primary">prmA</name>
    <name type="ordered locus">XOO0516</name>
</gene>
<comment type="function">
    <text evidence="1">Methylates ribosomal protein L11.</text>
</comment>
<comment type="catalytic activity">
    <reaction evidence="1">
        <text>L-lysyl-[protein] + 3 S-adenosyl-L-methionine = N(6),N(6),N(6)-trimethyl-L-lysyl-[protein] + 3 S-adenosyl-L-homocysteine + 3 H(+)</text>
        <dbReference type="Rhea" id="RHEA:54192"/>
        <dbReference type="Rhea" id="RHEA-COMP:9752"/>
        <dbReference type="Rhea" id="RHEA-COMP:13826"/>
        <dbReference type="ChEBI" id="CHEBI:15378"/>
        <dbReference type="ChEBI" id="CHEBI:29969"/>
        <dbReference type="ChEBI" id="CHEBI:57856"/>
        <dbReference type="ChEBI" id="CHEBI:59789"/>
        <dbReference type="ChEBI" id="CHEBI:61961"/>
    </reaction>
</comment>
<comment type="subcellular location">
    <subcellularLocation>
        <location evidence="1">Cytoplasm</location>
    </subcellularLocation>
</comment>
<comment type="similarity">
    <text evidence="1">Belongs to the methyltransferase superfamily. PrmA family.</text>
</comment>
<accession>Q2P856</accession>
<protein>
    <recommendedName>
        <fullName evidence="1">Ribosomal protein L11 methyltransferase</fullName>
        <shortName evidence="1">L11 Mtase</shortName>
        <ecNumber evidence="1">2.1.1.-</ecNumber>
    </recommendedName>
</protein>
<proteinExistence type="inferred from homology"/>